<evidence type="ECO:0000250" key="1"/>
<evidence type="ECO:0000255" key="2">
    <source>
        <dbReference type="HAMAP-Rule" id="MF_01057"/>
    </source>
</evidence>
<name>TRMB_EXIS2</name>
<organism>
    <name type="scientific">Exiguobacterium sibiricum (strain DSM 17290 / CCUG 55495 / CIP 109462 / JCM 13490 / 255-15)</name>
    <dbReference type="NCBI Taxonomy" id="262543"/>
    <lineage>
        <taxon>Bacteria</taxon>
        <taxon>Bacillati</taxon>
        <taxon>Bacillota</taxon>
        <taxon>Bacilli</taxon>
        <taxon>Bacillales</taxon>
        <taxon>Bacillales Family XII. Incertae Sedis</taxon>
        <taxon>Exiguobacterium</taxon>
    </lineage>
</organism>
<reference key="1">
    <citation type="submission" date="2008-04" db="EMBL/GenBank/DDBJ databases">
        <title>Complete sequence of chromosome of Exiguobacterium sibiricum 255-15.</title>
        <authorList>
            <consortium name="US DOE Joint Genome Institute"/>
            <person name="Copeland A."/>
            <person name="Lucas S."/>
            <person name="Lapidus A."/>
            <person name="Glavina del Rio T."/>
            <person name="Dalin E."/>
            <person name="Tice H."/>
            <person name="Bruce D."/>
            <person name="Goodwin L."/>
            <person name="Pitluck S."/>
            <person name="Kiss H."/>
            <person name="Chertkov O."/>
            <person name="Monk C."/>
            <person name="Brettin T."/>
            <person name="Detter J.C."/>
            <person name="Han C."/>
            <person name="Kuske C.R."/>
            <person name="Schmutz J."/>
            <person name="Larimer F."/>
            <person name="Land M."/>
            <person name="Hauser L."/>
            <person name="Kyrpides N."/>
            <person name="Mikhailova N."/>
            <person name="Vishnivetskaya T."/>
            <person name="Rodrigues D.F."/>
            <person name="Gilichinsky D."/>
            <person name="Tiedje J."/>
            <person name="Richardson P."/>
        </authorList>
    </citation>
    <scope>NUCLEOTIDE SEQUENCE [LARGE SCALE GENOMIC DNA]</scope>
    <source>
        <strain>DSM 17290 / CCUG 55495 / CIP 109462 / JCM 13490 / 255-15</strain>
    </source>
</reference>
<gene>
    <name evidence="2" type="primary">trmB</name>
    <name type="ordered locus">Exig_2260</name>
</gene>
<accession>B1YKF9</accession>
<protein>
    <recommendedName>
        <fullName evidence="2">tRNA (guanine-N(7)-)-methyltransferase</fullName>
        <ecNumber evidence="2">2.1.1.33</ecNumber>
    </recommendedName>
    <alternativeName>
        <fullName evidence="2">tRNA (guanine(46)-N(7))-methyltransferase</fullName>
    </alternativeName>
    <alternativeName>
        <fullName evidence="2">tRNA(m7G46)-methyltransferase</fullName>
    </alternativeName>
</protein>
<feature type="chain" id="PRO_1000136350" description="tRNA (guanine-N(7)-)-methyltransferase">
    <location>
        <begin position="1"/>
        <end position="213"/>
    </location>
</feature>
<feature type="active site" evidence="1">
    <location>
        <position position="118"/>
    </location>
</feature>
<feature type="binding site" evidence="2">
    <location>
        <position position="44"/>
    </location>
    <ligand>
        <name>S-adenosyl-L-methionine</name>
        <dbReference type="ChEBI" id="CHEBI:59789"/>
    </ligand>
</feature>
<feature type="binding site" evidence="2">
    <location>
        <position position="69"/>
    </location>
    <ligand>
        <name>S-adenosyl-L-methionine</name>
        <dbReference type="ChEBI" id="CHEBI:59789"/>
    </ligand>
</feature>
<feature type="binding site" evidence="2">
    <location>
        <position position="96"/>
    </location>
    <ligand>
        <name>S-adenosyl-L-methionine</name>
        <dbReference type="ChEBI" id="CHEBI:59789"/>
    </ligand>
</feature>
<feature type="binding site" evidence="2">
    <location>
        <position position="118"/>
    </location>
    <ligand>
        <name>S-adenosyl-L-methionine</name>
        <dbReference type="ChEBI" id="CHEBI:59789"/>
    </ligand>
</feature>
<feature type="binding site" evidence="2">
    <location>
        <position position="122"/>
    </location>
    <ligand>
        <name>substrate</name>
    </ligand>
</feature>
<feature type="binding site" evidence="2">
    <location>
        <position position="154"/>
    </location>
    <ligand>
        <name>substrate</name>
    </ligand>
</feature>
<feature type="binding site" evidence="2">
    <location>
        <begin position="191"/>
        <end position="194"/>
    </location>
    <ligand>
        <name>substrate</name>
    </ligand>
</feature>
<comment type="function">
    <text evidence="2">Catalyzes the formation of N(7)-methylguanine at position 46 (m7G46) in tRNA.</text>
</comment>
<comment type="catalytic activity">
    <reaction evidence="2">
        <text>guanosine(46) in tRNA + S-adenosyl-L-methionine = N(7)-methylguanosine(46) in tRNA + S-adenosyl-L-homocysteine</text>
        <dbReference type="Rhea" id="RHEA:42708"/>
        <dbReference type="Rhea" id="RHEA-COMP:10188"/>
        <dbReference type="Rhea" id="RHEA-COMP:10189"/>
        <dbReference type="ChEBI" id="CHEBI:57856"/>
        <dbReference type="ChEBI" id="CHEBI:59789"/>
        <dbReference type="ChEBI" id="CHEBI:74269"/>
        <dbReference type="ChEBI" id="CHEBI:74480"/>
        <dbReference type="EC" id="2.1.1.33"/>
    </reaction>
</comment>
<comment type="pathway">
    <text evidence="2">tRNA modification; N(7)-methylguanine-tRNA biosynthesis.</text>
</comment>
<comment type="similarity">
    <text evidence="2">Belongs to the class I-like SAM-binding methyltransferase superfamily. TrmB family.</text>
</comment>
<dbReference type="EC" id="2.1.1.33" evidence="2"/>
<dbReference type="EMBL" id="CP001022">
    <property type="protein sequence ID" value="ACB61712.1"/>
    <property type="molecule type" value="Genomic_DNA"/>
</dbReference>
<dbReference type="RefSeq" id="WP_012371129.1">
    <property type="nucleotide sequence ID" value="NC_010556.1"/>
</dbReference>
<dbReference type="SMR" id="B1YKF9"/>
<dbReference type="STRING" id="262543.Exig_2260"/>
<dbReference type="KEGG" id="esi:Exig_2260"/>
<dbReference type="eggNOG" id="COG0220">
    <property type="taxonomic scope" value="Bacteria"/>
</dbReference>
<dbReference type="HOGENOM" id="CLU_050910_2_1_9"/>
<dbReference type="OrthoDB" id="9802090at2"/>
<dbReference type="UniPathway" id="UPA00989"/>
<dbReference type="Proteomes" id="UP000001681">
    <property type="component" value="Chromosome"/>
</dbReference>
<dbReference type="GO" id="GO:0043527">
    <property type="term" value="C:tRNA methyltransferase complex"/>
    <property type="evidence" value="ECO:0007669"/>
    <property type="project" value="TreeGrafter"/>
</dbReference>
<dbReference type="GO" id="GO:0008176">
    <property type="term" value="F:tRNA (guanine(46)-N7)-methyltransferase activity"/>
    <property type="evidence" value="ECO:0007669"/>
    <property type="project" value="UniProtKB-UniRule"/>
</dbReference>
<dbReference type="CDD" id="cd02440">
    <property type="entry name" value="AdoMet_MTases"/>
    <property type="match status" value="1"/>
</dbReference>
<dbReference type="FunFam" id="3.40.50.150:FF:000035">
    <property type="entry name" value="tRNA (guanine-N(7)-)-methyltransferase"/>
    <property type="match status" value="1"/>
</dbReference>
<dbReference type="Gene3D" id="3.40.50.150">
    <property type="entry name" value="Vaccinia Virus protein VP39"/>
    <property type="match status" value="1"/>
</dbReference>
<dbReference type="HAMAP" id="MF_01057">
    <property type="entry name" value="tRNA_methyltr_TrmB"/>
    <property type="match status" value="1"/>
</dbReference>
<dbReference type="InterPro" id="IPR029063">
    <property type="entry name" value="SAM-dependent_MTases_sf"/>
</dbReference>
<dbReference type="InterPro" id="IPR003358">
    <property type="entry name" value="tRNA_(Gua-N-7)_MeTrfase_Trmb"/>
</dbReference>
<dbReference type="InterPro" id="IPR055361">
    <property type="entry name" value="tRNA_methyltr_TrmB_bact"/>
</dbReference>
<dbReference type="NCBIfam" id="NF001080">
    <property type="entry name" value="PRK00121.2-2"/>
    <property type="match status" value="1"/>
</dbReference>
<dbReference type="NCBIfam" id="TIGR00091">
    <property type="entry name" value="tRNA (guanosine(46)-N7)-methyltransferase TrmB"/>
    <property type="match status" value="1"/>
</dbReference>
<dbReference type="PANTHER" id="PTHR23417">
    <property type="entry name" value="3-DEOXY-D-MANNO-OCTULOSONIC-ACID TRANSFERASE/TRNA GUANINE-N 7 - -METHYLTRANSFERASE"/>
    <property type="match status" value="1"/>
</dbReference>
<dbReference type="PANTHER" id="PTHR23417:SF14">
    <property type="entry name" value="PENTACOTRIPEPTIDE-REPEAT REGION OF PRORP DOMAIN-CONTAINING PROTEIN"/>
    <property type="match status" value="1"/>
</dbReference>
<dbReference type="Pfam" id="PF02390">
    <property type="entry name" value="Methyltransf_4"/>
    <property type="match status" value="1"/>
</dbReference>
<dbReference type="SUPFAM" id="SSF53335">
    <property type="entry name" value="S-adenosyl-L-methionine-dependent methyltransferases"/>
    <property type="match status" value="1"/>
</dbReference>
<dbReference type="PROSITE" id="PS51625">
    <property type="entry name" value="SAM_MT_TRMB"/>
    <property type="match status" value="1"/>
</dbReference>
<sequence>MRLRHKPWALDYMKEQSSIYIADPSTLKGNWSNEFKNENPIYIEVGSGKGAFITGMAKQYPEVNFVAIELFESVAVAIVQKMVEEPLANVRVLTVDAKDLRDFFEKGEVARVYLNFSDPWPKSRHAKRRLTYKTFLATYEDILPEKGQIHFKTDNRKLFESSLMTMSAYGMTFDWMSLDLHANEPENNVRTEYEERFSAMGQPIYRMEATYTK</sequence>
<keyword id="KW-0489">Methyltransferase</keyword>
<keyword id="KW-1185">Reference proteome</keyword>
<keyword id="KW-0949">S-adenosyl-L-methionine</keyword>
<keyword id="KW-0808">Transferase</keyword>
<keyword id="KW-0819">tRNA processing</keyword>
<proteinExistence type="inferred from homology"/>